<evidence type="ECO:0000305" key="1"/>
<gene>
    <name type="primary">MLP22</name>
</gene>
<feature type="chain" id="PRO_0000210065" description="Major latex protein 22">
    <location>
        <begin position="1"/>
        <end position="158"/>
    </location>
</feature>
<keyword id="KW-0968">Cytoplasmic vesicle</keyword>
<keyword id="KW-0926">Vacuole</keyword>
<organism>
    <name type="scientific">Papaver somniferum</name>
    <name type="common">Opium poppy</name>
    <dbReference type="NCBI Taxonomy" id="3469"/>
    <lineage>
        <taxon>Eukaryota</taxon>
        <taxon>Viridiplantae</taxon>
        <taxon>Streptophyta</taxon>
        <taxon>Embryophyta</taxon>
        <taxon>Tracheophyta</taxon>
        <taxon>Spermatophyta</taxon>
        <taxon>Magnoliopsida</taxon>
        <taxon>Ranunculales</taxon>
        <taxon>Papaveraceae</taxon>
        <taxon>Papaveroideae</taxon>
        <taxon>Papaver</taxon>
    </lineage>
</organism>
<accession>Q41020</accession>
<protein>
    <recommendedName>
        <fullName>Major latex protein 22</fullName>
        <shortName>MLP 22</shortName>
    </recommendedName>
    <alternativeName>
        <fullName>gMLP22</fullName>
    </alternativeName>
</protein>
<proteinExistence type="evidence at transcript level"/>
<reference key="1">
    <citation type="journal article" date="1992" name="Plant Mol. Biol.">
        <title>Organization of the major latex protein gene family in opium poppy.</title>
        <authorList>
            <person name="Nessler C.L."/>
            <person name="Burnett R.J."/>
        </authorList>
    </citation>
    <scope>NUCLEOTIDE SEQUENCE [GENOMIC DNA]</scope>
    <source>
        <strain>cv. UNL186</strain>
        <tissue>Leaf</tissue>
    </source>
</reference>
<dbReference type="EMBL" id="M95496">
    <property type="protein sequence ID" value="AAA33630.1"/>
    <property type="molecule type" value="Genomic_DNA"/>
</dbReference>
<dbReference type="PIR" id="S28427">
    <property type="entry name" value="S28427"/>
</dbReference>
<dbReference type="SMR" id="Q41020"/>
<dbReference type="GO" id="GO:0031410">
    <property type="term" value="C:cytoplasmic vesicle"/>
    <property type="evidence" value="ECO:0007669"/>
    <property type="project" value="UniProtKB-KW"/>
</dbReference>
<dbReference type="GO" id="GO:0005773">
    <property type="term" value="C:vacuole"/>
    <property type="evidence" value="ECO:0007669"/>
    <property type="project" value="UniProtKB-SubCell"/>
</dbReference>
<dbReference type="GO" id="GO:0006952">
    <property type="term" value="P:defense response"/>
    <property type="evidence" value="ECO:0007669"/>
    <property type="project" value="InterPro"/>
</dbReference>
<dbReference type="Gene3D" id="3.30.530.20">
    <property type="match status" value="1"/>
</dbReference>
<dbReference type="InterPro" id="IPR000916">
    <property type="entry name" value="Bet_v_I/MLP"/>
</dbReference>
<dbReference type="InterPro" id="IPR052006">
    <property type="entry name" value="MLP-like"/>
</dbReference>
<dbReference type="InterPro" id="IPR023393">
    <property type="entry name" value="START-like_dom_sf"/>
</dbReference>
<dbReference type="PANTHER" id="PTHR31338">
    <property type="entry name" value="POLYKETIDE CYCLASE/DEHYDRASE AND LIPID TRANSPORT SUPERFAMILY PROTEIN"/>
    <property type="match status" value="1"/>
</dbReference>
<dbReference type="PANTHER" id="PTHR31338:SF16">
    <property type="entry name" value="POLYKETIDE CYCLASE_DEHYDRASE AND LIPID TRANSPORT SUPERFAMILY PROTEIN"/>
    <property type="match status" value="1"/>
</dbReference>
<dbReference type="Pfam" id="PF00407">
    <property type="entry name" value="Bet_v_1"/>
    <property type="match status" value="1"/>
</dbReference>
<dbReference type="SMART" id="SM01037">
    <property type="entry name" value="Bet_v_1"/>
    <property type="match status" value="1"/>
</dbReference>
<dbReference type="SUPFAM" id="SSF55961">
    <property type="entry name" value="Bet v1-like"/>
    <property type="match status" value="1"/>
</dbReference>
<sequence>MAEHHHTISGLVGKLVTELEVNCNADEYYKIFKHHEDLPNAIPHIYRGVKAVEGDRITSGFIKEWHYIIEGKPLTCKERTTYEDEARTIHHSTVEGVLLDDYKKFDATLVNPKADGHGSIVTWIVEYEKINEDSPVPISYLTFHKIIEDLNTYLCASD</sequence>
<comment type="function">
    <text>Not known; MLPs constitute up to 50% of the soluble latex protein.</text>
</comment>
<comment type="subcellular location">
    <subcellularLocation>
        <location>Vacuole</location>
    </subcellularLocation>
    <subcellularLocation>
        <location>Cytoplasmic vesicle</location>
    </subcellularLocation>
    <text>Central vacuole of developing laticifers and membrane-bound vesicles of mature cells.</text>
</comment>
<comment type="tissue specificity">
    <text>Laticifer.</text>
</comment>
<comment type="developmental stage">
    <text>MLPs accumulate early in laticifer development and persist through maturity.</text>
</comment>
<comment type="similarity">
    <text evidence="1">Belongs to the MLP family.</text>
</comment>
<name>MLP22_PAPSO</name>